<protein>
    <recommendedName>
        <fullName evidence="1">Photosystem II protein D1</fullName>
        <shortName evidence="1">PSII D1 protein</shortName>
        <ecNumber evidence="1">1.10.3.9</ecNumber>
    </recommendedName>
    <alternativeName>
        <fullName evidence="1">Photosystem II Q(B) protein</fullName>
    </alternativeName>
</protein>
<reference key="1">
    <citation type="journal article" date="2007" name="PLoS Genet.">
        <title>Patterns and implications of gene gain and loss in the evolution of Prochlorococcus.</title>
        <authorList>
            <person name="Kettler G.C."/>
            <person name="Martiny A.C."/>
            <person name="Huang K."/>
            <person name="Zucker J."/>
            <person name="Coleman M.L."/>
            <person name="Rodrigue S."/>
            <person name="Chen F."/>
            <person name="Lapidus A."/>
            <person name="Ferriera S."/>
            <person name="Johnson J."/>
            <person name="Steglich C."/>
            <person name="Church G.M."/>
            <person name="Richardson P."/>
            <person name="Chisholm S.W."/>
        </authorList>
    </citation>
    <scope>NUCLEOTIDE SEQUENCE [LARGE SCALE GENOMIC DNA]</scope>
    <source>
        <strain>MIT 9215</strain>
    </source>
</reference>
<dbReference type="EC" id="1.10.3.9" evidence="1"/>
<dbReference type="EMBL" id="CP000825">
    <property type="protein sequence ID" value="ABV50916.1"/>
    <property type="status" value="ALT_INIT"/>
    <property type="molecule type" value="Genomic_DNA"/>
</dbReference>
<dbReference type="RefSeq" id="WP_002805533.1">
    <property type="nucleotide sequence ID" value="NC_009840.1"/>
</dbReference>
<dbReference type="SMR" id="A8G5N5"/>
<dbReference type="STRING" id="93060.P9215_13011"/>
<dbReference type="KEGG" id="pmh:P9215_13011"/>
<dbReference type="eggNOG" id="ENOG502Z87P">
    <property type="taxonomic scope" value="Bacteria"/>
</dbReference>
<dbReference type="HOGENOM" id="CLU_054206_1_0_3"/>
<dbReference type="OrthoDB" id="505356at2"/>
<dbReference type="Proteomes" id="UP000002014">
    <property type="component" value="Chromosome"/>
</dbReference>
<dbReference type="GO" id="GO:0009523">
    <property type="term" value="C:photosystem II"/>
    <property type="evidence" value="ECO:0007669"/>
    <property type="project" value="UniProtKB-KW"/>
</dbReference>
<dbReference type="GO" id="GO:0031676">
    <property type="term" value="C:plasma membrane-derived thylakoid membrane"/>
    <property type="evidence" value="ECO:0007669"/>
    <property type="project" value="UniProtKB-SubCell"/>
</dbReference>
<dbReference type="GO" id="GO:0016168">
    <property type="term" value="F:chlorophyll binding"/>
    <property type="evidence" value="ECO:0007669"/>
    <property type="project" value="UniProtKB-UniRule"/>
</dbReference>
<dbReference type="GO" id="GO:0045156">
    <property type="term" value="F:electron transporter, transferring electrons within the cyclic electron transport pathway of photosynthesis activity"/>
    <property type="evidence" value="ECO:0007669"/>
    <property type="project" value="InterPro"/>
</dbReference>
<dbReference type="GO" id="GO:0005506">
    <property type="term" value="F:iron ion binding"/>
    <property type="evidence" value="ECO:0007669"/>
    <property type="project" value="UniProtKB-UniRule"/>
</dbReference>
<dbReference type="GO" id="GO:0016682">
    <property type="term" value="F:oxidoreductase activity, acting on diphenols and related substances as donors, oxygen as acceptor"/>
    <property type="evidence" value="ECO:0007669"/>
    <property type="project" value="UniProtKB-UniRule"/>
</dbReference>
<dbReference type="GO" id="GO:0010242">
    <property type="term" value="F:oxygen evolving activity"/>
    <property type="evidence" value="ECO:0007669"/>
    <property type="project" value="UniProtKB-EC"/>
</dbReference>
<dbReference type="GO" id="GO:0009772">
    <property type="term" value="P:photosynthetic electron transport in photosystem II"/>
    <property type="evidence" value="ECO:0007669"/>
    <property type="project" value="InterPro"/>
</dbReference>
<dbReference type="GO" id="GO:0009635">
    <property type="term" value="P:response to herbicide"/>
    <property type="evidence" value="ECO:0007669"/>
    <property type="project" value="UniProtKB-KW"/>
</dbReference>
<dbReference type="FunFam" id="1.20.85.10:FF:000002">
    <property type="entry name" value="Photosystem II protein D1"/>
    <property type="match status" value="1"/>
</dbReference>
<dbReference type="Gene3D" id="1.20.85.10">
    <property type="entry name" value="Photosystem II protein D1-like"/>
    <property type="match status" value="1"/>
</dbReference>
<dbReference type="HAMAP" id="MF_01379">
    <property type="entry name" value="PSII_PsbA_D1"/>
    <property type="match status" value="1"/>
</dbReference>
<dbReference type="InterPro" id="IPR055266">
    <property type="entry name" value="D1/D2"/>
</dbReference>
<dbReference type="InterPro" id="IPR036854">
    <property type="entry name" value="Photo_II_D1/D2_sf"/>
</dbReference>
<dbReference type="InterPro" id="IPR000484">
    <property type="entry name" value="Photo_RC_L/M"/>
</dbReference>
<dbReference type="InterPro" id="IPR055265">
    <property type="entry name" value="Photo_RC_L/M_CS"/>
</dbReference>
<dbReference type="InterPro" id="IPR005867">
    <property type="entry name" value="PSII_D1"/>
</dbReference>
<dbReference type="NCBIfam" id="TIGR01151">
    <property type="entry name" value="psbA"/>
    <property type="match status" value="1"/>
</dbReference>
<dbReference type="PANTHER" id="PTHR33149:SF12">
    <property type="entry name" value="PHOTOSYSTEM II D2 PROTEIN"/>
    <property type="match status" value="1"/>
</dbReference>
<dbReference type="PANTHER" id="PTHR33149">
    <property type="entry name" value="PHOTOSYSTEM II PROTEIN D1"/>
    <property type="match status" value="1"/>
</dbReference>
<dbReference type="Pfam" id="PF00124">
    <property type="entry name" value="Photo_RC"/>
    <property type="match status" value="1"/>
</dbReference>
<dbReference type="PRINTS" id="PR00256">
    <property type="entry name" value="REACTNCENTRE"/>
</dbReference>
<dbReference type="SUPFAM" id="SSF81483">
    <property type="entry name" value="Bacterial photosystem II reaction centre, L and M subunits"/>
    <property type="match status" value="1"/>
</dbReference>
<dbReference type="PROSITE" id="PS00244">
    <property type="entry name" value="REACTION_CENTER"/>
    <property type="match status" value="1"/>
</dbReference>
<gene>
    <name evidence="1" type="primary">psbA</name>
    <name type="ordered locus">P9215_13011</name>
</gene>
<evidence type="ECO:0000255" key="1">
    <source>
        <dbReference type="HAMAP-Rule" id="MF_01379"/>
    </source>
</evidence>
<evidence type="ECO:0000305" key="2"/>
<accession>A8G5N5</accession>
<comment type="function">
    <text evidence="1">Photosystem II (PSII) is a light-driven water:plastoquinone oxidoreductase that uses light energy to abstract electrons from H(2)O, generating O(2) and a proton gradient subsequently used for ATP formation. It consists of a core antenna complex that captures photons, and an electron transfer chain that converts photonic excitation into a charge separation. The D1/D2 (PsbA/PsbD) reaction center heterodimer binds P680, the primary electron donor of PSII as well as several subsequent electron acceptors.</text>
</comment>
<comment type="catalytic activity">
    <reaction evidence="1">
        <text>2 a plastoquinone + 4 hnu + 2 H2O = 2 a plastoquinol + O2</text>
        <dbReference type="Rhea" id="RHEA:36359"/>
        <dbReference type="Rhea" id="RHEA-COMP:9561"/>
        <dbReference type="Rhea" id="RHEA-COMP:9562"/>
        <dbReference type="ChEBI" id="CHEBI:15377"/>
        <dbReference type="ChEBI" id="CHEBI:15379"/>
        <dbReference type="ChEBI" id="CHEBI:17757"/>
        <dbReference type="ChEBI" id="CHEBI:30212"/>
        <dbReference type="ChEBI" id="CHEBI:62192"/>
        <dbReference type="EC" id="1.10.3.9"/>
    </reaction>
</comment>
<comment type="cofactor">
    <text evidence="1">The D1/D2 heterodimer binds P680, chlorophylls that are the primary electron donor of PSII, and subsequent electron acceptors. It shares a non-heme iron and each subunit binds pheophytin, quinone, additional chlorophylls, carotenoids and lipids. D1 provides most of the ligands for the Mn4-Ca-O5 cluster of the oxygen-evolving complex (OEC). There is also a Cl(-1) ion associated with D1 and D2, which is required for oxygen evolution. The PSII complex binds additional chlorophylls, carotenoids and specific lipids.</text>
</comment>
<comment type="subunit">
    <text evidence="2">PSII is composed of 1 copy each of membrane proteins PsbA, PsbB, PsbC, PsbD, PsbE, PsbF, PsbH, PsbI, PsbJ, PsbK, PsbL, PsbM, PsbT, PsbX, PsbY, Psb30/Ycf12, peripheral proteins PsbO, CyanoQ (PsbQ), PsbU, PsbV and a large number of cofactors. It forms dimeric complexes.</text>
</comment>
<comment type="subcellular location">
    <subcellularLocation>
        <location evidence="1">Cellular thylakoid membrane</location>
        <topology evidence="1">Multi-pass membrane protein</topology>
    </subcellularLocation>
</comment>
<comment type="PTM">
    <text evidence="1">Tyr-162 forms a radical intermediate that is referred to as redox-active TyrZ, YZ or Y-Z.</text>
</comment>
<comment type="PTM">
    <text evidence="1">C-terminally processed by CtpA; processing is essential to allow assembly of the oxygen-evolving complex and thus photosynthetic growth.</text>
</comment>
<comment type="miscellaneous">
    <text evidence="1">Cyanobacteria usually contain more than 2 copies of the psbA gene.</text>
</comment>
<comment type="miscellaneous">
    <text evidence="1">2 of the reaction center chlorophylls (ChlD1 and ChlD2) are entirely coordinated by water.</text>
</comment>
<comment type="miscellaneous">
    <text evidence="1">Herbicides such as atrazine, BNT, diuron or ioxynil bind in the Q(B) binding site and block subsequent electron transfer.</text>
</comment>
<comment type="similarity">
    <text evidence="1">Belongs to the reaction center PufL/M/PsbA/D family.</text>
</comment>
<comment type="sequence caution" evidence="2">
    <conflict type="erroneous initiation">
        <sequence resource="EMBL-CDS" id="ABV50916"/>
    </conflict>
    <text>Truncated N-terminus.</text>
</comment>
<proteinExistence type="inferred from homology"/>
<name>PSBA_PROM2</name>
<sequence length="360" mass="39638">MTTIQQQRSSLLKGWPQFCEWVTSTNNRIYVGWFGVLMIPCLLTAAACFIVAFIAAPPVDIDGIREPVAGSFLYGNNIISGAVVPSSNAIGLHFYPIWEAATVDEWLYNGGPYQLVIFHFLIGISAYMGRQWELSYRLGMRPWICVAYSAPVSAAFAVFLVYPFGQGSFSDGMPLGISGTFNFMFVFQAEHNILMHPFHMAGVAGMFGGSLFSAMHGSLVTSSLIRETTETESQNYGYKFGQEEETYNIVAAHGYFGRLIFQYASFNNSRSLHFFLAVFPVVCVWLTSMGICTMAFNLNGFNFNQSVVDANGKIVPTWGDVLNRANLGMEVMHERNAHNFPLDLAAAESTTVALSAPAIG</sequence>
<keyword id="KW-0106">Calcium</keyword>
<keyword id="KW-0148">Chlorophyll</keyword>
<keyword id="KW-0157">Chromophore</keyword>
<keyword id="KW-0249">Electron transport</keyword>
<keyword id="KW-0359">Herbicide resistance</keyword>
<keyword id="KW-0408">Iron</keyword>
<keyword id="KW-0460">Magnesium</keyword>
<keyword id="KW-0464">Manganese</keyword>
<keyword id="KW-0472">Membrane</keyword>
<keyword id="KW-0479">Metal-binding</keyword>
<keyword id="KW-0560">Oxidoreductase</keyword>
<keyword id="KW-0602">Photosynthesis</keyword>
<keyword id="KW-0604">Photosystem II</keyword>
<keyword id="KW-0793">Thylakoid</keyword>
<keyword id="KW-0812">Transmembrane</keyword>
<keyword id="KW-1133">Transmembrane helix</keyword>
<keyword id="KW-0813">Transport</keyword>
<organism>
    <name type="scientific">Prochlorococcus marinus (strain MIT 9215)</name>
    <dbReference type="NCBI Taxonomy" id="93060"/>
    <lineage>
        <taxon>Bacteria</taxon>
        <taxon>Bacillati</taxon>
        <taxon>Cyanobacteriota</taxon>
        <taxon>Cyanophyceae</taxon>
        <taxon>Synechococcales</taxon>
        <taxon>Prochlorococcaceae</taxon>
        <taxon>Prochlorococcus</taxon>
    </lineage>
</organism>
<feature type="chain" id="PRO_0000339928" description="Photosystem II protein D1" evidence="1">
    <location>
        <begin position="1"/>
        <end position="345"/>
    </location>
</feature>
<feature type="propeptide" id="PRO_0000339929" evidence="1">
    <location>
        <begin position="346"/>
        <end position="360"/>
    </location>
</feature>
<feature type="transmembrane region" description="Helical" evidence="1">
    <location>
        <begin position="30"/>
        <end position="47"/>
    </location>
</feature>
<feature type="transmembrane region" description="Helical" evidence="1">
    <location>
        <begin position="119"/>
        <end position="134"/>
    </location>
</feature>
<feature type="transmembrane region" description="Helical" evidence="1">
    <location>
        <begin position="143"/>
        <end position="157"/>
    </location>
</feature>
<feature type="transmembrane region" description="Helical" evidence="1">
    <location>
        <begin position="198"/>
        <end position="219"/>
    </location>
</feature>
<feature type="transmembrane region" description="Helical" evidence="1">
    <location>
        <begin position="275"/>
        <end position="289"/>
    </location>
</feature>
<feature type="binding site" description="axial binding residue" evidence="1">
    <location>
        <position position="119"/>
    </location>
    <ligand>
        <name>chlorophyll a</name>
        <dbReference type="ChEBI" id="CHEBI:58416"/>
        <label>ChlzD1</label>
    </ligand>
    <ligandPart>
        <name>Mg</name>
        <dbReference type="ChEBI" id="CHEBI:25107"/>
    </ligandPart>
</feature>
<feature type="binding site" evidence="1">
    <location>
        <position position="127"/>
    </location>
    <ligand>
        <name>pheophytin a</name>
        <dbReference type="ChEBI" id="CHEBI:136840"/>
        <label>D1</label>
    </ligand>
</feature>
<feature type="binding site" evidence="1">
    <location>
        <position position="171"/>
    </location>
    <ligand>
        <name>[CaMn4O5] cluster</name>
        <dbReference type="ChEBI" id="CHEBI:189552"/>
    </ligand>
</feature>
<feature type="binding site" evidence="1">
    <location>
        <position position="190"/>
    </location>
    <ligand>
        <name>[CaMn4O5] cluster</name>
        <dbReference type="ChEBI" id="CHEBI:189552"/>
    </ligand>
</feature>
<feature type="binding site" description="axial binding residue" evidence="1">
    <location>
        <position position="199"/>
    </location>
    <ligand>
        <name>chlorophyll a</name>
        <dbReference type="ChEBI" id="CHEBI:58416"/>
        <label>PD1</label>
    </ligand>
    <ligandPart>
        <name>Mg</name>
        <dbReference type="ChEBI" id="CHEBI:25107"/>
    </ligandPart>
</feature>
<feature type="binding site" evidence="1">
    <location>
        <position position="216"/>
    </location>
    <ligand>
        <name>a quinone</name>
        <dbReference type="ChEBI" id="CHEBI:132124"/>
        <label>B</label>
    </ligand>
</feature>
<feature type="binding site" evidence="1">
    <location>
        <position position="216"/>
    </location>
    <ligand>
        <name>Fe cation</name>
        <dbReference type="ChEBI" id="CHEBI:24875"/>
        <note>ligand shared with heterodimeric partner</note>
    </ligand>
</feature>
<feature type="binding site" evidence="1">
    <location>
        <begin position="265"/>
        <end position="266"/>
    </location>
    <ligand>
        <name>a quinone</name>
        <dbReference type="ChEBI" id="CHEBI:132124"/>
        <label>B</label>
    </ligand>
</feature>
<feature type="binding site" evidence="1">
    <location>
        <position position="273"/>
    </location>
    <ligand>
        <name>Fe cation</name>
        <dbReference type="ChEBI" id="CHEBI:24875"/>
        <note>ligand shared with heterodimeric partner</note>
    </ligand>
</feature>
<feature type="binding site" evidence="1">
    <location>
        <position position="333"/>
    </location>
    <ligand>
        <name>[CaMn4O5] cluster</name>
        <dbReference type="ChEBI" id="CHEBI:189552"/>
    </ligand>
</feature>
<feature type="binding site" evidence="1">
    <location>
        <position position="334"/>
    </location>
    <ligand>
        <name>[CaMn4O5] cluster</name>
        <dbReference type="ChEBI" id="CHEBI:189552"/>
    </ligand>
</feature>
<feature type="binding site" evidence="1">
    <location>
        <position position="343"/>
    </location>
    <ligand>
        <name>[CaMn4O5] cluster</name>
        <dbReference type="ChEBI" id="CHEBI:189552"/>
    </ligand>
</feature>
<feature type="binding site" evidence="1">
    <location>
        <position position="345"/>
    </location>
    <ligand>
        <name>[CaMn4O5] cluster</name>
        <dbReference type="ChEBI" id="CHEBI:189552"/>
    </ligand>
</feature>
<feature type="site" description="Tyrosine radical intermediate" evidence="1">
    <location>
        <position position="162"/>
    </location>
</feature>
<feature type="site" description="Stabilizes free radical intermediate" evidence="1">
    <location>
        <position position="191"/>
    </location>
</feature>
<feature type="site" description="Cleavage; by CtpA" evidence="1">
    <location>
        <begin position="345"/>
        <end position="346"/>
    </location>
</feature>